<geneLocation type="plasmid">
    <name>megaplasmid Rsp</name>
</geneLocation>
<dbReference type="EC" id="7.5.2.10" evidence="1"/>
<dbReference type="EMBL" id="AL646053">
    <property type="protein sequence ID" value="CAD18785.1"/>
    <property type="molecule type" value="Genomic_DNA"/>
</dbReference>
<dbReference type="RefSeq" id="WP_011004879.1">
    <property type="nucleotide sequence ID" value="NC_003296.1"/>
</dbReference>
<dbReference type="SMR" id="Q8XPK6"/>
<dbReference type="STRING" id="267608.RSp1634"/>
<dbReference type="EnsemblBacteria" id="CAD18785">
    <property type="protein sequence ID" value="CAD18785"/>
    <property type="gene ID" value="RSp1634"/>
</dbReference>
<dbReference type="KEGG" id="rso:RSp1634"/>
<dbReference type="PATRIC" id="fig|267608.8.peg.5108"/>
<dbReference type="eggNOG" id="COG1129">
    <property type="taxonomic scope" value="Bacteria"/>
</dbReference>
<dbReference type="HOGENOM" id="CLU_000604_92_3_4"/>
<dbReference type="Proteomes" id="UP000001436">
    <property type="component" value="Plasmid megaplasmid Rsp"/>
</dbReference>
<dbReference type="GO" id="GO:0005886">
    <property type="term" value="C:plasma membrane"/>
    <property type="evidence" value="ECO:0007669"/>
    <property type="project" value="UniProtKB-SubCell"/>
</dbReference>
<dbReference type="GO" id="GO:0015614">
    <property type="term" value="F:ABC-type D-xylose transporter activity"/>
    <property type="evidence" value="ECO:0007669"/>
    <property type="project" value="UniProtKB-EC"/>
</dbReference>
<dbReference type="GO" id="GO:0005524">
    <property type="term" value="F:ATP binding"/>
    <property type="evidence" value="ECO:0007669"/>
    <property type="project" value="UniProtKB-KW"/>
</dbReference>
<dbReference type="GO" id="GO:0016887">
    <property type="term" value="F:ATP hydrolysis activity"/>
    <property type="evidence" value="ECO:0007669"/>
    <property type="project" value="InterPro"/>
</dbReference>
<dbReference type="CDD" id="cd03216">
    <property type="entry name" value="ABC_Carb_Monos_I"/>
    <property type="match status" value="1"/>
</dbReference>
<dbReference type="CDD" id="cd03215">
    <property type="entry name" value="ABC_Carb_Monos_II"/>
    <property type="match status" value="1"/>
</dbReference>
<dbReference type="FunFam" id="3.40.50.300:FF:000127">
    <property type="entry name" value="Ribose import ATP-binding protein RbsA"/>
    <property type="match status" value="1"/>
</dbReference>
<dbReference type="Gene3D" id="3.40.50.300">
    <property type="entry name" value="P-loop containing nucleotide triphosphate hydrolases"/>
    <property type="match status" value="2"/>
</dbReference>
<dbReference type="InterPro" id="IPR003593">
    <property type="entry name" value="AAA+_ATPase"/>
</dbReference>
<dbReference type="InterPro" id="IPR050107">
    <property type="entry name" value="ABC_carbohydrate_import_ATPase"/>
</dbReference>
<dbReference type="InterPro" id="IPR003439">
    <property type="entry name" value="ABC_transporter-like_ATP-bd"/>
</dbReference>
<dbReference type="InterPro" id="IPR013455">
    <property type="entry name" value="ABC_transptr_XylG"/>
</dbReference>
<dbReference type="InterPro" id="IPR027417">
    <property type="entry name" value="P-loop_NTPase"/>
</dbReference>
<dbReference type="NCBIfam" id="NF010069">
    <property type="entry name" value="PRK13549.1"/>
    <property type="match status" value="1"/>
</dbReference>
<dbReference type="NCBIfam" id="TIGR02633">
    <property type="entry name" value="xylG"/>
    <property type="match status" value="1"/>
</dbReference>
<dbReference type="PANTHER" id="PTHR43790">
    <property type="entry name" value="CARBOHYDRATE TRANSPORT ATP-BINDING PROTEIN MG119-RELATED"/>
    <property type="match status" value="1"/>
</dbReference>
<dbReference type="PANTHER" id="PTHR43790:SF1">
    <property type="entry name" value="XYLOSE IMPORT ATP-BINDING PROTEIN XYLG"/>
    <property type="match status" value="1"/>
</dbReference>
<dbReference type="Pfam" id="PF00005">
    <property type="entry name" value="ABC_tran"/>
    <property type="match status" value="2"/>
</dbReference>
<dbReference type="SMART" id="SM00382">
    <property type="entry name" value="AAA"/>
    <property type="match status" value="2"/>
</dbReference>
<dbReference type="SUPFAM" id="SSF52540">
    <property type="entry name" value="P-loop containing nucleoside triphosphate hydrolases"/>
    <property type="match status" value="2"/>
</dbReference>
<dbReference type="PROSITE" id="PS50893">
    <property type="entry name" value="ABC_TRANSPORTER_2"/>
    <property type="match status" value="2"/>
</dbReference>
<dbReference type="PROSITE" id="PS51280">
    <property type="entry name" value="XYLG"/>
    <property type="match status" value="1"/>
</dbReference>
<accession>Q8XPK6</accession>
<protein>
    <recommendedName>
        <fullName evidence="1">Xylose import ATP-binding protein XylG</fullName>
        <ecNumber evidence="1">7.5.2.10</ecNumber>
    </recommendedName>
</protein>
<feature type="chain" id="PRO_0000271513" description="Xylose import ATP-binding protein XylG">
    <location>
        <begin position="1"/>
        <end position="514"/>
    </location>
</feature>
<feature type="domain" description="ABC transporter 1" evidence="1">
    <location>
        <begin position="7"/>
        <end position="246"/>
    </location>
</feature>
<feature type="domain" description="ABC transporter 2" evidence="1">
    <location>
        <begin position="263"/>
        <end position="508"/>
    </location>
</feature>
<feature type="binding site" evidence="1">
    <location>
        <begin position="39"/>
        <end position="46"/>
    </location>
    <ligand>
        <name>ATP</name>
        <dbReference type="ChEBI" id="CHEBI:30616"/>
    </ligand>
</feature>
<sequence>MDNRTLFEMRSIVKAFSGVRALDGVSLAVRPGECVGLCGENGAGKSTLMKVLSGVYPYGTYEGEILWDGAPLRAHSVRDSEHAGIVIIHQELMLVQQLSVAENIFLGNEITKPGGRMDYDAMHRKAEELLARLRLTDVNVAAPVMNYGSGHQQLFEIAKALAKNARLLILDEPTSSLSAKEIEVLLSIIEDLKRGGVACVYISHKLDEVKRVCDTITVIRDGKHIGTRPAAELDINGIITMMVGREMTSLFPKVEHTVGDVVLEARNVTCWDVTNPNRKRVDDVSFSVRRGEILGVAGLVGAGRTEMVSALFGAYPGRSSAQVLVEGKPVKVHSPAQAIAHGICLVPEDRKRHGIVPLMGVGENITLATLAQYARGLRVDKGAELMTVDREIKRLRIKTASPALSIASLSGGNQQKAVLTKMVLACPKVLILDEPTRGVDVGSKYDIYQMIADLAASGVAIIMVSSELPEILGMSDRVLVIGEGELRGDFANQGLTQERILAAAIHAEPRLRAA</sequence>
<gene>
    <name evidence="1" type="primary">xylG</name>
    <name type="ordered locus">RSp1634</name>
</gene>
<reference key="1">
    <citation type="journal article" date="2002" name="Nature">
        <title>Genome sequence of the plant pathogen Ralstonia solanacearum.</title>
        <authorList>
            <person name="Salanoubat M."/>
            <person name="Genin S."/>
            <person name="Artiguenave F."/>
            <person name="Gouzy J."/>
            <person name="Mangenot S."/>
            <person name="Arlat M."/>
            <person name="Billault A."/>
            <person name="Brottier P."/>
            <person name="Camus J.-C."/>
            <person name="Cattolico L."/>
            <person name="Chandler M."/>
            <person name="Choisne N."/>
            <person name="Claudel-Renard C."/>
            <person name="Cunnac S."/>
            <person name="Demange N."/>
            <person name="Gaspin C."/>
            <person name="Lavie M."/>
            <person name="Moisan A."/>
            <person name="Robert C."/>
            <person name="Saurin W."/>
            <person name="Schiex T."/>
            <person name="Siguier P."/>
            <person name="Thebault P."/>
            <person name="Whalen M."/>
            <person name="Wincker P."/>
            <person name="Levy M."/>
            <person name="Weissenbach J."/>
            <person name="Boucher C.A."/>
        </authorList>
    </citation>
    <scope>NUCLEOTIDE SEQUENCE [LARGE SCALE GENOMIC DNA]</scope>
    <source>
        <strain>ATCC BAA-1114 / GMI1000</strain>
    </source>
</reference>
<organism>
    <name type="scientific">Ralstonia nicotianae (strain ATCC BAA-1114 / GMI1000)</name>
    <name type="common">Ralstonia solanacearum</name>
    <dbReference type="NCBI Taxonomy" id="267608"/>
    <lineage>
        <taxon>Bacteria</taxon>
        <taxon>Pseudomonadati</taxon>
        <taxon>Pseudomonadota</taxon>
        <taxon>Betaproteobacteria</taxon>
        <taxon>Burkholderiales</taxon>
        <taxon>Burkholderiaceae</taxon>
        <taxon>Ralstonia</taxon>
        <taxon>Ralstonia solanacearum species complex</taxon>
    </lineage>
</organism>
<proteinExistence type="inferred from homology"/>
<keyword id="KW-0067">ATP-binding</keyword>
<keyword id="KW-0997">Cell inner membrane</keyword>
<keyword id="KW-1003">Cell membrane</keyword>
<keyword id="KW-0472">Membrane</keyword>
<keyword id="KW-0547">Nucleotide-binding</keyword>
<keyword id="KW-0614">Plasmid</keyword>
<keyword id="KW-1185">Reference proteome</keyword>
<keyword id="KW-0677">Repeat</keyword>
<keyword id="KW-0762">Sugar transport</keyword>
<keyword id="KW-1278">Translocase</keyword>
<keyword id="KW-0813">Transport</keyword>
<evidence type="ECO:0000255" key="1">
    <source>
        <dbReference type="HAMAP-Rule" id="MF_01722"/>
    </source>
</evidence>
<name>XYLG_RALN1</name>
<comment type="function">
    <text evidence="1">Part of the ABC transporter complex XylFGH involved in xylose import. Responsible for energy coupling to the transport system.</text>
</comment>
<comment type="catalytic activity">
    <reaction evidence="1">
        <text>D-xylose(out) + ATP + H2O = D-xylose(in) + ADP + phosphate + H(+)</text>
        <dbReference type="Rhea" id="RHEA:29899"/>
        <dbReference type="ChEBI" id="CHEBI:15377"/>
        <dbReference type="ChEBI" id="CHEBI:15378"/>
        <dbReference type="ChEBI" id="CHEBI:30616"/>
        <dbReference type="ChEBI" id="CHEBI:43474"/>
        <dbReference type="ChEBI" id="CHEBI:53455"/>
        <dbReference type="ChEBI" id="CHEBI:456216"/>
        <dbReference type="EC" id="7.5.2.10"/>
    </reaction>
</comment>
<comment type="subunit">
    <text evidence="1">The complex is composed of two ATP-binding proteins (XylG), two transmembrane proteins (XylH) and a solute-binding protein (XylF).</text>
</comment>
<comment type="subcellular location">
    <subcellularLocation>
        <location evidence="1">Cell inner membrane</location>
        <topology evidence="1">Peripheral membrane protein</topology>
    </subcellularLocation>
</comment>
<comment type="similarity">
    <text evidence="1">Belongs to the ABC transporter superfamily. Xylose importer (TC 3.A.1.2.4) family.</text>
</comment>